<sequence>MTQEIHYSVLLKESVDALVTNADGVYIDGTFGRGGHSRAVLQKLSPQGRLLAFDKDPEAVAYGRELAGSDNRFSMVHDSFVNMASHWASAAHANNWSLSGVLLDLGVSSPQLDQAERGFSFMHDGPLDMRMDNSSGQTAAEWINTAEESELAFVIKEYGEERFARRMARAIVAEREKSPITQTLRLANIVSEANPKWEKGKHPATRAFQAIRIFINRELDDLTATLAQSLEMLPSGGRLVVISFHSLEDRIVKRFMRDQARGKQFPIGMPVTEDMLEKKLKTLGKAQRAGDRELAENIRSRSATLRVAEKL</sequence>
<gene>
    <name evidence="1" type="primary">rsmH</name>
    <name type="synonym">mraW</name>
    <name type="ordered locus">TERTU_3057</name>
</gene>
<comment type="function">
    <text evidence="1">Specifically methylates the N4 position of cytidine in position 1402 (C1402) of 16S rRNA.</text>
</comment>
<comment type="catalytic activity">
    <reaction evidence="1">
        <text>cytidine(1402) in 16S rRNA + S-adenosyl-L-methionine = N(4)-methylcytidine(1402) in 16S rRNA + S-adenosyl-L-homocysteine + H(+)</text>
        <dbReference type="Rhea" id="RHEA:42928"/>
        <dbReference type="Rhea" id="RHEA-COMP:10286"/>
        <dbReference type="Rhea" id="RHEA-COMP:10287"/>
        <dbReference type="ChEBI" id="CHEBI:15378"/>
        <dbReference type="ChEBI" id="CHEBI:57856"/>
        <dbReference type="ChEBI" id="CHEBI:59789"/>
        <dbReference type="ChEBI" id="CHEBI:74506"/>
        <dbReference type="ChEBI" id="CHEBI:82748"/>
        <dbReference type="EC" id="2.1.1.199"/>
    </reaction>
</comment>
<comment type="subcellular location">
    <subcellularLocation>
        <location evidence="1">Cytoplasm</location>
    </subcellularLocation>
</comment>
<comment type="similarity">
    <text evidence="1">Belongs to the methyltransferase superfamily. RsmH family.</text>
</comment>
<accession>C5BP42</accession>
<proteinExistence type="inferred from homology"/>
<feature type="chain" id="PRO_0000387186" description="Ribosomal RNA small subunit methyltransferase H">
    <location>
        <begin position="1"/>
        <end position="311"/>
    </location>
</feature>
<feature type="binding site" evidence="1">
    <location>
        <begin position="34"/>
        <end position="36"/>
    </location>
    <ligand>
        <name>S-adenosyl-L-methionine</name>
        <dbReference type="ChEBI" id="CHEBI:59789"/>
    </ligand>
</feature>
<feature type="binding site" evidence="1">
    <location>
        <position position="54"/>
    </location>
    <ligand>
        <name>S-adenosyl-L-methionine</name>
        <dbReference type="ChEBI" id="CHEBI:59789"/>
    </ligand>
</feature>
<feature type="binding site" evidence="1">
    <location>
        <position position="80"/>
    </location>
    <ligand>
        <name>S-adenosyl-L-methionine</name>
        <dbReference type="ChEBI" id="CHEBI:59789"/>
    </ligand>
</feature>
<feature type="binding site" evidence="1">
    <location>
        <position position="104"/>
    </location>
    <ligand>
        <name>S-adenosyl-L-methionine</name>
        <dbReference type="ChEBI" id="CHEBI:59789"/>
    </ligand>
</feature>
<feature type="binding site" evidence="1">
    <location>
        <position position="111"/>
    </location>
    <ligand>
        <name>S-adenosyl-L-methionine</name>
        <dbReference type="ChEBI" id="CHEBI:59789"/>
    </ligand>
</feature>
<evidence type="ECO:0000255" key="1">
    <source>
        <dbReference type="HAMAP-Rule" id="MF_01007"/>
    </source>
</evidence>
<name>RSMH_TERTT</name>
<keyword id="KW-0963">Cytoplasm</keyword>
<keyword id="KW-0489">Methyltransferase</keyword>
<keyword id="KW-1185">Reference proteome</keyword>
<keyword id="KW-0698">rRNA processing</keyword>
<keyword id="KW-0949">S-adenosyl-L-methionine</keyword>
<keyword id="KW-0808">Transferase</keyword>
<protein>
    <recommendedName>
        <fullName evidence="1">Ribosomal RNA small subunit methyltransferase H</fullName>
        <ecNumber evidence="1">2.1.1.199</ecNumber>
    </recommendedName>
    <alternativeName>
        <fullName evidence="1">16S rRNA m(4)C1402 methyltransferase</fullName>
    </alternativeName>
    <alternativeName>
        <fullName evidence="1">rRNA (cytosine-N(4)-)-methyltransferase RsmH</fullName>
    </alternativeName>
</protein>
<organism>
    <name type="scientific">Teredinibacter turnerae (strain ATCC 39867 / T7901)</name>
    <dbReference type="NCBI Taxonomy" id="377629"/>
    <lineage>
        <taxon>Bacteria</taxon>
        <taxon>Pseudomonadati</taxon>
        <taxon>Pseudomonadota</taxon>
        <taxon>Gammaproteobacteria</taxon>
        <taxon>Cellvibrionales</taxon>
        <taxon>Cellvibrionaceae</taxon>
        <taxon>Teredinibacter</taxon>
    </lineage>
</organism>
<reference key="1">
    <citation type="journal article" date="2009" name="PLoS ONE">
        <title>The complete genome of Teredinibacter turnerae T7901: an intracellular endosymbiont of marine wood-boring bivalves (shipworms).</title>
        <authorList>
            <person name="Yang J.C."/>
            <person name="Madupu R."/>
            <person name="Durkin A.S."/>
            <person name="Ekborg N.A."/>
            <person name="Pedamallu C.S."/>
            <person name="Hostetler J.B."/>
            <person name="Radune D."/>
            <person name="Toms B.S."/>
            <person name="Henrissat B."/>
            <person name="Coutinho P.M."/>
            <person name="Schwarz S."/>
            <person name="Field L."/>
            <person name="Trindade-Silva A.E."/>
            <person name="Soares C.A.G."/>
            <person name="Elshahawi S."/>
            <person name="Hanora A."/>
            <person name="Schmidt E.W."/>
            <person name="Haygood M.G."/>
            <person name="Posfai J."/>
            <person name="Benner J."/>
            <person name="Madinger C."/>
            <person name="Nove J."/>
            <person name="Anton B."/>
            <person name="Chaudhary K."/>
            <person name="Foster J."/>
            <person name="Holman A."/>
            <person name="Kumar S."/>
            <person name="Lessard P.A."/>
            <person name="Luyten Y.A."/>
            <person name="Slatko B."/>
            <person name="Wood N."/>
            <person name="Wu B."/>
            <person name="Teplitski M."/>
            <person name="Mougous J.D."/>
            <person name="Ward N."/>
            <person name="Eisen J.A."/>
            <person name="Badger J.H."/>
            <person name="Distel D.L."/>
        </authorList>
    </citation>
    <scope>NUCLEOTIDE SEQUENCE [LARGE SCALE GENOMIC DNA]</scope>
    <source>
        <strain>ATCC 39867 / T7901</strain>
    </source>
</reference>
<dbReference type="EC" id="2.1.1.199" evidence="1"/>
<dbReference type="EMBL" id="CP001614">
    <property type="protein sequence ID" value="ACR11783.1"/>
    <property type="molecule type" value="Genomic_DNA"/>
</dbReference>
<dbReference type="RefSeq" id="WP_015817894.1">
    <property type="nucleotide sequence ID" value="NC_012997.1"/>
</dbReference>
<dbReference type="SMR" id="C5BP42"/>
<dbReference type="STRING" id="377629.TERTU_3057"/>
<dbReference type="KEGG" id="ttu:TERTU_3057"/>
<dbReference type="eggNOG" id="COG0275">
    <property type="taxonomic scope" value="Bacteria"/>
</dbReference>
<dbReference type="HOGENOM" id="CLU_038422_2_0_6"/>
<dbReference type="OrthoDB" id="9806637at2"/>
<dbReference type="Proteomes" id="UP000009080">
    <property type="component" value="Chromosome"/>
</dbReference>
<dbReference type="GO" id="GO:0005737">
    <property type="term" value="C:cytoplasm"/>
    <property type="evidence" value="ECO:0007669"/>
    <property type="project" value="UniProtKB-SubCell"/>
</dbReference>
<dbReference type="GO" id="GO:0071424">
    <property type="term" value="F:rRNA (cytosine-N4-)-methyltransferase activity"/>
    <property type="evidence" value="ECO:0007669"/>
    <property type="project" value="UniProtKB-UniRule"/>
</dbReference>
<dbReference type="GO" id="GO:0070475">
    <property type="term" value="P:rRNA base methylation"/>
    <property type="evidence" value="ECO:0007669"/>
    <property type="project" value="UniProtKB-UniRule"/>
</dbReference>
<dbReference type="FunFam" id="1.10.150.170:FF:000001">
    <property type="entry name" value="Ribosomal RNA small subunit methyltransferase H"/>
    <property type="match status" value="1"/>
</dbReference>
<dbReference type="Gene3D" id="1.10.150.170">
    <property type="entry name" value="Putative methyltransferase TM0872, insert domain"/>
    <property type="match status" value="1"/>
</dbReference>
<dbReference type="Gene3D" id="3.40.50.150">
    <property type="entry name" value="Vaccinia Virus protein VP39"/>
    <property type="match status" value="1"/>
</dbReference>
<dbReference type="HAMAP" id="MF_01007">
    <property type="entry name" value="16SrRNA_methyltr_H"/>
    <property type="match status" value="1"/>
</dbReference>
<dbReference type="InterPro" id="IPR002903">
    <property type="entry name" value="RsmH"/>
</dbReference>
<dbReference type="InterPro" id="IPR023397">
    <property type="entry name" value="SAM-dep_MeTrfase_MraW_recog"/>
</dbReference>
<dbReference type="InterPro" id="IPR029063">
    <property type="entry name" value="SAM-dependent_MTases_sf"/>
</dbReference>
<dbReference type="NCBIfam" id="TIGR00006">
    <property type="entry name" value="16S rRNA (cytosine(1402)-N(4))-methyltransferase RsmH"/>
    <property type="match status" value="1"/>
</dbReference>
<dbReference type="PANTHER" id="PTHR11265:SF0">
    <property type="entry name" value="12S RRNA N4-METHYLCYTIDINE METHYLTRANSFERASE"/>
    <property type="match status" value="1"/>
</dbReference>
<dbReference type="PANTHER" id="PTHR11265">
    <property type="entry name" value="S-ADENOSYL-METHYLTRANSFERASE MRAW"/>
    <property type="match status" value="1"/>
</dbReference>
<dbReference type="Pfam" id="PF01795">
    <property type="entry name" value="Methyltransf_5"/>
    <property type="match status" value="1"/>
</dbReference>
<dbReference type="PIRSF" id="PIRSF004486">
    <property type="entry name" value="MraW"/>
    <property type="match status" value="1"/>
</dbReference>
<dbReference type="SUPFAM" id="SSF81799">
    <property type="entry name" value="Putative methyltransferase TM0872, insert domain"/>
    <property type="match status" value="1"/>
</dbReference>
<dbReference type="SUPFAM" id="SSF53335">
    <property type="entry name" value="S-adenosyl-L-methionine-dependent methyltransferases"/>
    <property type="match status" value="1"/>
</dbReference>